<proteinExistence type="evidence at protein level"/>
<dbReference type="EC" id="5.3.1.31" evidence="1"/>
<dbReference type="EMBL" id="CP001983">
    <property type="protein sequence ID" value="ADE70658.1"/>
    <property type="molecule type" value="Genomic_DNA"/>
</dbReference>
<dbReference type="RefSeq" id="WP_013058332.1">
    <property type="nucleotide sequence ID" value="NC_014019.1"/>
</dbReference>
<dbReference type="SMR" id="D5E1S9"/>
<dbReference type="STRING" id="545693.BMQ_3645"/>
<dbReference type="KEGG" id="bmq:BMQ_3645"/>
<dbReference type="eggNOG" id="COG2407">
    <property type="taxonomic scope" value="Bacteria"/>
</dbReference>
<dbReference type="HOGENOM" id="CLU_045643_1_0_9"/>
<dbReference type="Proteomes" id="UP000000935">
    <property type="component" value="Chromosome"/>
</dbReference>
<dbReference type="GO" id="GO:0005737">
    <property type="term" value="C:cytoplasm"/>
    <property type="evidence" value="ECO:0007669"/>
    <property type="project" value="InterPro"/>
</dbReference>
<dbReference type="GO" id="GO:0008736">
    <property type="term" value="F:L-fucose isomerase activity"/>
    <property type="evidence" value="ECO:0007669"/>
    <property type="project" value="InterPro"/>
</dbReference>
<dbReference type="GO" id="GO:0006004">
    <property type="term" value="P:fucose metabolic process"/>
    <property type="evidence" value="ECO:0007669"/>
    <property type="project" value="InterPro"/>
</dbReference>
<dbReference type="InterPro" id="IPR004216">
    <property type="entry name" value="Fuc/Ara_isomerase_C"/>
</dbReference>
<dbReference type="InterPro" id="IPR015888">
    <property type="entry name" value="Fuc_isomerase_C"/>
</dbReference>
<dbReference type="InterPro" id="IPR009015">
    <property type="entry name" value="Fucose_isomerase_N/cen_sf"/>
</dbReference>
<dbReference type="PANTHER" id="PTHR36120">
    <property type="entry name" value="FUCOSE ISOMERASE"/>
    <property type="match status" value="1"/>
</dbReference>
<dbReference type="PANTHER" id="PTHR36120:SF1">
    <property type="entry name" value="L-FUCOSE ISOMERASE C-TERMINAL DOMAIN-CONTAINING PROTEIN"/>
    <property type="match status" value="1"/>
</dbReference>
<dbReference type="Pfam" id="PF02952">
    <property type="entry name" value="Fucose_iso_C"/>
    <property type="match status" value="1"/>
</dbReference>
<dbReference type="SUPFAM" id="SSF50443">
    <property type="entry name" value="FucI/AraA C-terminal domain-like"/>
    <property type="match status" value="1"/>
</dbReference>
<dbReference type="SUPFAM" id="SSF53743">
    <property type="entry name" value="FucI/AraA N-terminal and middle domains"/>
    <property type="match status" value="1"/>
</dbReference>
<evidence type="ECO:0000269" key="1">
    <source>
    </source>
</evidence>
<evidence type="ECO:0000303" key="2">
    <source>
    </source>
</evidence>
<evidence type="ECO:0000305" key="3"/>
<evidence type="ECO:0000312" key="4">
    <source>
        <dbReference type="EMBL" id="ADE70658.1"/>
    </source>
</evidence>
<keyword id="KW-0119">Carbohydrate metabolism</keyword>
<keyword id="KW-0413">Isomerase</keyword>
<keyword id="KW-1185">Reference proteome</keyword>
<organism>
    <name type="scientific">Priestia megaterium (strain ATCC 12872 / QMB1551)</name>
    <name type="common">Bacillus megaterium</name>
    <dbReference type="NCBI Taxonomy" id="545693"/>
    <lineage>
        <taxon>Bacteria</taxon>
        <taxon>Bacillati</taxon>
        <taxon>Bacillota</taxon>
        <taxon>Bacilli</taxon>
        <taxon>Bacillales</taxon>
        <taxon>Bacillaceae</taxon>
        <taxon>Priestia</taxon>
    </lineage>
</organism>
<reference key="1">
    <citation type="journal article" date="2011" name="J. Bacteriol.">
        <title>Genome sequences of the biotechnologically important Bacillus megaterium strains QM B1551 and DSM319.</title>
        <authorList>
            <person name="Eppinger M."/>
            <person name="Bunk B."/>
            <person name="Johns M.A."/>
            <person name="Edirisinghe J.N."/>
            <person name="Kutumbaka K.K."/>
            <person name="Koenig S.S."/>
            <person name="Creasy H.H."/>
            <person name="Rosovitz M.J."/>
            <person name="Riley D.R."/>
            <person name="Daugherty S."/>
            <person name="Martin M."/>
            <person name="Elbourne L.D."/>
            <person name="Paulsen I."/>
            <person name="Biedendieck R."/>
            <person name="Braun C."/>
            <person name="Grayburn S."/>
            <person name="Dhingra S."/>
            <person name="Lukyanchuk V."/>
            <person name="Ball B."/>
            <person name="Ul-Qamar R."/>
            <person name="Seibel J."/>
            <person name="Bremer E."/>
            <person name="Jahn D."/>
            <person name="Ravel J."/>
            <person name="Vary P.S."/>
        </authorList>
    </citation>
    <scope>NUCLEOTIDE SEQUENCE [LARGE SCALE GENOMIC DNA]</scope>
    <source>
        <strain>ATCC 12872 / DSM 1804 / QMB1551</strain>
    </source>
</reference>
<reference key="2">
    <citation type="journal article" date="2020" name="Biochem. Biophys. Res. Commun.">
        <title>A transaldolase-dependent sulfoglycolysis pathway in Bacillus megaterium DSM 1804.</title>
        <authorList>
            <person name="Liu Y."/>
            <person name="Wei Y."/>
            <person name="Zhou Y."/>
            <person name="Ang E.L."/>
            <person name="Zhao H."/>
            <person name="Zhang Y."/>
        </authorList>
    </citation>
    <scope>FUNCTION</scope>
    <scope>CATALYTIC ACTIVITY</scope>
    <source>
        <strain>ATCC 12872 / DSM 1804 / QMB1551</strain>
    </source>
</reference>
<protein>
    <recommendedName>
        <fullName evidence="3">Sulfoquinovose isomerase</fullName>
        <shortName evidence="3">SQ isomerase</shortName>
        <ecNumber evidence="1">5.3.1.31</ecNumber>
    </recommendedName>
</protein>
<name>SQVD_PRIM1</name>
<accession>D5E1S9</accession>
<sequence>MQNTTVLYVPIGRKTFDIEVAEIYRQKSMEWLKGNCSTVIAPEQIVTSVEELQGFLDSIKGNKIDTVLYQSVTFADGEFMVKILEYFKQPVIVWSVREPSVGGRLRLNSLTGGNSTSNVLRNHQHPFAFVFGNPDEKALQERLLRQINVMRVLKALNELKIGVVGDYPPGFFFSAANEEELKSALGVTLHKMDLQEAFKECVKLPEQEWIGEVERAEKQVIGLNRNDETVTKFAQFSTYIKKHIQSEELDALAMRCWPDFFNDLGAAPCSTLSQFTEDGMVTSCESDIHGSISMFILRELAGGNAPYLGDLVHIDEEKNSVVFWHCGAGAYSLANPSTGATAGVHPNRKIGFAMDFGLKAGEVTIFRVSHTPDGYRLLVMKGNALDVEQPFTGTSVEVELATNASDTLYELMHAGYEPHFALVYGDVTEHLIELGRMLNLETKVYV</sequence>
<feature type="chain" id="PRO_0000458970" description="Sulfoquinovose isomerase">
    <location>
        <begin position="1"/>
        <end position="446"/>
    </location>
</feature>
<comment type="function">
    <text evidence="1">Part of the sulfo-TAL (or sulfo-SFT) pathway, a D-sulfoquinovose degradation pathway that produces sulfolactate (SL) (PubMed:33036753). Catalyzes the isomerization of sulfoquinovose (SQ) to 6-deoxy-6-sulfo-D-fructose (SF) (PubMed:33036753).</text>
</comment>
<comment type="catalytic activity">
    <reaction evidence="1">
        <text>6-sulfo-beta-D-quinovose = 6-deoxy-6-sulfo-D-fructose</text>
        <dbReference type="Rhea" id="RHEA:40439"/>
        <dbReference type="ChEBI" id="CHEBI:77133"/>
        <dbReference type="ChEBI" id="CHEBI:142957"/>
        <dbReference type="EC" id="5.3.1.31"/>
    </reaction>
    <physiologicalReaction direction="left-to-right" evidence="1">
        <dbReference type="Rhea" id="RHEA:40440"/>
    </physiologicalReaction>
</comment>
<comment type="similarity">
    <text evidence="3">Belongs to the SqvD family.</text>
</comment>
<gene>
    <name evidence="2" type="primary">sqvD</name>
    <name evidence="4" type="ordered locus">BMQ_3645</name>
</gene>